<evidence type="ECO:0000250" key="1"/>
<evidence type="ECO:0000255" key="2"/>
<evidence type="ECO:0000305" key="3"/>
<sequence>MSKSLNIIWQYIRAFVLIYACLYAGIFLASLLPITIPGSIIGMLILFVLLALQILPAKWVNPGCYVLIRYMALLFVPIGVGVMQYFDLLRAQFGPVVVSCAISTLVVFVVVSWSSHLIHGERKVVGQKGTKK</sequence>
<protein>
    <recommendedName>
        <fullName>UPF0299 membrane protein YohJ</fullName>
    </recommendedName>
</protein>
<proteinExistence type="inferred from homology"/>
<organism>
    <name type="scientific">Salmonella typhi</name>
    <dbReference type="NCBI Taxonomy" id="90370"/>
    <lineage>
        <taxon>Bacteria</taxon>
        <taxon>Pseudomonadati</taxon>
        <taxon>Pseudomonadota</taxon>
        <taxon>Gammaproteobacteria</taxon>
        <taxon>Enterobacterales</taxon>
        <taxon>Enterobacteriaceae</taxon>
        <taxon>Salmonella</taxon>
    </lineage>
</organism>
<accession>P60635</accession>
<accession>Q8XEP3</accession>
<feature type="chain" id="PRO_0000072812" description="UPF0299 membrane protein YohJ">
    <location>
        <begin position="1"/>
        <end position="132"/>
    </location>
</feature>
<feature type="topological domain" description="Periplasmic" evidence="2">
    <location>
        <begin position="1"/>
        <end position="6"/>
    </location>
</feature>
<feature type="transmembrane region" description="Helical" evidence="2">
    <location>
        <begin position="7"/>
        <end position="27"/>
    </location>
</feature>
<feature type="topological domain" description="Cytoplasmic" evidence="2">
    <location>
        <begin position="28"/>
        <end position="30"/>
    </location>
</feature>
<feature type="transmembrane region" description="Helical" evidence="2">
    <location>
        <begin position="31"/>
        <end position="51"/>
    </location>
</feature>
<feature type="topological domain" description="Periplasmic" evidence="2">
    <location>
        <begin position="52"/>
        <end position="62"/>
    </location>
</feature>
<feature type="transmembrane region" description="Helical" evidence="2">
    <location>
        <begin position="63"/>
        <end position="83"/>
    </location>
</feature>
<feature type="topological domain" description="Cytoplasmic" evidence="2">
    <location>
        <begin position="84"/>
        <end position="92"/>
    </location>
</feature>
<feature type="transmembrane region" description="Helical" evidence="2">
    <location>
        <begin position="93"/>
        <end position="113"/>
    </location>
</feature>
<feature type="topological domain" description="Periplasmic" evidence="2">
    <location>
        <begin position="114"/>
        <end position="132"/>
    </location>
</feature>
<comment type="subcellular location">
    <subcellularLocation>
        <location evidence="1">Cell inner membrane</location>
        <topology evidence="1">Multi-pass membrane protein</topology>
    </subcellularLocation>
</comment>
<comment type="similarity">
    <text evidence="3">Belongs to the UPF0299 family.</text>
</comment>
<reference key="1">
    <citation type="journal article" date="2003" name="J. Bacteriol.">
        <title>Comparative genomics of Salmonella enterica serovar Typhi strains Ty2 and CT18.</title>
        <authorList>
            <person name="Deng W."/>
            <person name="Liou S.-R."/>
            <person name="Plunkett G. III"/>
            <person name="Mayhew G.F."/>
            <person name="Rose D.J."/>
            <person name="Burland V."/>
            <person name="Kodoyianni V."/>
            <person name="Schwartz D.C."/>
            <person name="Blattner F.R."/>
        </authorList>
    </citation>
    <scope>NUCLEOTIDE SEQUENCE [LARGE SCALE GENOMIC DNA]</scope>
    <source>
        <strain>ATCC 700931 / Ty2</strain>
    </source>
</reference>
<reference key="2">
    <citation type="journal article" date="2001" name="Nature">
        <title>Complete genome sequence of a multiple drug resistant Salmonella enterica serovar Typhi CT18.</title>
        <authorList>
            <person name="Parkhill J."/>
            <person name="Dougan G."/>
            <person name="James K.D."/>
            <person name="Thomson N.R."/>
            <person name="Pickard D."/>
            <person name="Wain J."/>
            <person name="Churcher C.M."/>
            <person name="Mungall K.L."/>
            <person name="Bentley S.D."/>
            <person name="Holden M.T.G."/>
            <person name="Sebaihia M."/>
            <person name="Baker S."/>
            <person name="Basham D."/>
            <person name="Brooks K."/>
            <person name="Chillingworth T."/>
            <person name="Connerton P."/>
            <person name="Cronin A."/>
            <person name="Davis P."/>
            <person name="Davies R.M."/>
            <person name="Dowd L."/>
            <person name="White N."/>
            <person name="Farrar J."/>
            <person name="Feltwell T."/>
            <person name="Hamlin N."/>
            <person name="Haque A."/>
            <person name="Hien T.T."/>
            <person name="Holroyd S."/>
            <person name="Jagels K."/>
            <person name="Krogh A."/>
            <person name="Larsen T.S."/>
            <person name="Leather S."/>
            <person name="Moule S."/>
            <person name="O'Gaora P."/>
            <person name="Parry C."/>
            <person name="Quail M.A."/>
            <person name="Rutherford K.M."/>
            <person name="Simmonds M."/>
            <person name="Skelton J."/>
            <person name="Stevens K."/>
            <person name="Whitehead S."/>
            <person name="Barrell B.G."/>
        </authorList>
    </citation>
    <scope>NUCLEOTIDE SEQUENCE [LARGE SCALE GENOMIC DNA]</scope>
    <source>
        <strain>CT18</strain>
    </source>
</reference>
<gene>
    <name type="primary">yohJ</name>
    <name type="ordered locus">STY2411</name>
    <name type="ordered locus">t0674</name>
</gene>
<name>YOHJ_SALTI</name>
<dbReference type="EMBL" id="AE014613">
    <property type="protein sequence ID" value="AAO68372.1"/>
    <property type="molecule type" value="Genomic_DNA"/>
</dbReference>
<dbReference type="EMBL" id="AL513382">
    <property type="protein sequence ID" value="CAD02561.1"/>
    <property type="molecule type" value="Genomic_DNA"/>
</dbReference>
<dbReference type="RefSeq" id="NP_456740.1">
    <property type="nucleotide sequence ID" value="NC_003198.1"/>
</dbReference>
<dbReference type="RefSeq" id="WP_000045719.1">
    <property type="nucleotide sequence ID" value="NZ_WSUR01000002.1"/>
</dbReference>
<dbReference type="SMR" id="P60635"/>
<dbReference type="STRING" id="220341.gene:17586316"/>
<dbReference type="KEGG" id="stt:t0674"/>
<dbReference type="KEGG" id="sty:STY2411"/>
<dbReference type="PATRIC" id="fig|220341.7.peg.2437"/>
<dbReference type="eggNOG" id="COG1380">
    <property type="taxonomic scope" value="Bacteria"/>
</dbReference>
<dbReference type="HOGENOM" id="CLU_113736_1_1_6"/>
<dbReference type="OMA" id="MSVMFIP"/>
<dbReference type="OrthoDB" id="385012at2"/>
<dbReference type="Proteomes" id="UP000000541">
    <property type="component" value="Chromosome"/>
</dbReference>
<dbReference type="Proteomes" id="UP000002670">
    <property type="component" value="Chromosome"/>
</dbReference>
<dbReference type="GO" id="GO:0005886">
    <property type="term" value="C:plasma membrane"/>
    <property type="evidence" value="ECO:0007669"/>
    <property type="project" value="UniProtKB-SubCell"/>
</dbReference>
<dbReference type="HAMAP" id="MF_01144">
    <property type="entry name" value="UPF0299"/>
    <property type="match status" value="1"/>
</dbReference>
<dbReference type="InterPro" id="IPR005538">
    <property type="entry name" value="LrgA/CidA"/>
</dbReference>
<dbReference type="InterPro" id="IPR022957">
    <property type="entry name" value="Uncharacterised_UPF0299"/>
</dbReference>
<dbReference type="NCBIfam" id="NF002494">
    <property type="entry name" value="PRK01821.1"/>
    <property type="match status" value="1"/>
</dbReference>
<dbReference type="PANTHER" id="PTHR33931">
    <property type="entry name" value="HOLIN-LIKE PROTEIN CIDA-RELATED"/>
    <property type="match status" value="1"/>
</dbReference>
<dbReference type="PANTHER" id="PTHR33931:SF5">
    <property type="entry name" value="UPF0299 MEMBRANE PROTEIN YOHJ"/>
    <property type="match status" value="1"/>
</dbReference>
<dbReference type="Pfam" id="PF03788">
    <property type="entry name" value="LrgA"/>
    <property type="match status" value="1"/>
</dbReference>
<keyword id="KW-0997">Cell inner membrane</keyword>
<keyword id="KW-1003">Cell membrane</keyword>
<keyword id="KW-0472">Membrane</keyword>
<keyword id="KW-0812">Transmembrane</keyword>
<keyword id="KW-1133">Transmembrane helix</keyword>